<feature type="chain" id="PRO_1000100472" description="Nicotinate-nucleotide--dimethylbenzimidazole phosphoribosyltransferase">
    <location>
        <begin position="1"/>
        <end position="338"/>
    </location>
</feature>
<feature type="active site" description="Proton acceptor" evidence="1">
    <location>
        <position position="305"/>
    </location>
</feature>
<name>COBT_RHILW</name>
<protein>
    <recommendedName>
        <fullName evidence="1">Nicotinate-nucleotide--dimethylbenzimidazole phosphoribosyltransferase</fullName>
        <shortName evidence="1">NN:DBI PRT</shortName>
        <ecNumber evidence="1">2.4.2.21</ecNumber>
    </recommendedName>
    <alternativeName>
        <fullName evidence="1">N(1)-alpha-phosphoribosyltransferase</fullName>
    </alternativeName>
</protein>
<sequence>MSVSGLPFDDFRTLLRDLPGPDARALVTARERDAQLTKPPGALGRLEEIAFWLAAWTGRTPAVNRPLVAIFAGNHGVTRQGITPFPPAVTQQMVENFAAGGAAINQICVAYDLGLKVFDLALDYPTGDITEEAALSERDCAATMAFGMEAIAGGTDLLCIGEMGIGNTTIAAAINYALYGGSARDWVGPGTGSEGEMLERKIAAVEKAVELHGDHLDDPLEIMRRLGGREIAAMAGAILAARMERIPVLIDGYVATAAAAILKAANPSALDHCLIGHVSAEPGHLRAIEMLGKTPLLALGMRLGEGTGAALAAGIVKAAAACHSGMATFAQAGVTNKD</sequence>
<proteinExistence type="inferred from homology"/>
<reference key="1">
    <citation type="journal article" date="2010" name="Stand. Genomic Sci.">
        <title>Complete genome sequence of Rhizobium leguminosarum bv trifolii strain WSM2304, an effective microsymbiont of the South American clover Trifolium polymorphum.</title>
        <authorList>
            <person name="Reeve W."/>
            <person name="O'Hara G."/>
            <person name="Chain P."/>
            <person name="Ardley J."/>
            <person name="Brau L."/>
            <person name="Nandesena K."/>
            <person name="Tiwari R."/>
            <person name="Malfatti S."/>
            <person name="Kiss H."/>
            <person name="Lapidus A."/>
            <person name="Copeland A."/>
            <person name="Nolan M."/>
            <person name="Land M."/>
            <person name="Ivanova N."/>
            <person name="Mavromatis K."/>
            <person name="Markowitz V."/>
            <person name="Kyrpides N."/>
            <person name="Melino V."/>
            <person name="Denton M."/>
            <person name="Yates R."/>
            <person name="Howieson J."/>
        </authorList>
    </citation>
    <scope>NUCLEOTIDE SEQUENCE [LARGE SCALE GENOMIC DNA]</scope>
    <source>
        <strain>WSM2304</strain>
    </source>
</reference>
<dbReference type="EC" id="2.4.2.21" evidence="1"/>
<dbReference type="EMBL" id="CP001191">
    <property type="protein sequence ID" value="ACI55365.1"/>
    <property type="molecule type" value="Genomic_DNA"/>
</dbReference>
<dbReference type="RefSeq" id="WP_012557928.1">
    <property type="nucleotide sequence ID" value="NC_011369.1"/>
</dbReference>
<dbReference type="SMR" id="B5ZSC4"/>
<dbReference type="STRING" id="395492.Rleg2_2081"/>
<dbReference type="KEGG" id="rlt:Rleg2_2081"/>
<dbReference type="eggNOG" id="COG2038">
    <property type="taxonomic scope" value="Bacteria"/>
</dbReference>
<dbReference type="HOGENOM" id="CLU_002982_0_1_5"/>
<dbReference type="UniPathway" id="UPA00061">
    <property type="reaction ID" value="UER00516"/>
</dbReference>
<dbReference type="Proteomes" id="UP000008330">
    <property type="component" value="Chromosome"/>
</dbReference>
<dbReference type="GO" id="GO:0008939">
    <property type="term" value="F:nicotinate-nucleotide-dimethylbenzimidazole phosphoribosyltransferase activity"/>
    <property type="evidence" value="ECO:0007669"/>
    <property type="project" value="UniProtKB-UniRule"/>
</dbReference>
<dbReference type="GO" id="GO:0009236">
    <property type="term" value="P:cobalamin biosynthetic process"/>
    <property type="evidence" value="ECO:0007669"/>
    <property type="project" value="UniProtKB-KW"/>
</dbReference>
<dbReference type="CDD" id="cd02439">
    <property type="entry name" value="DMB-PRT_CobT"/>
    <property type="match status" value="1"/>
</dbReference>
<dbReference type="Gene3D" id="1.10.1610.10">
    <property type="match status" value="1"/>
</dbReference>
<dbReference type="Gene3D" id="3.40.50.10210">
    <property type="match status" value="1"/>
</dbReference>
<dbReference type="HAMAP" id="MF_00230">
    <property type="entry name" value="CobT"/>
    <property type="match status" value="1"/>
</dbReference>
<dbReference type="InterPro" id="IPR003200">
    <property type="entry name" value="Nict_dMeBzImd_PRibTrfase"/>
</dbReference>
<dbReference type="InterPro" id="IPR017846">
    <property type="entry name" value="Nict_dMeBzImd_PRibTrfase_bact"/>
</dbReference>
<dbReference type="InterPro" id="IPR023195">
    <property type="entry name" value="Nict_dMeBzImd_PRibTrfase_N"/>
</dbReference>
<dbReference type="InterPro" id="IPR036087">
    <property type="entry name" value="Nict_dMeBzImd_PRibTrfase_sf"/>
</dbReference>
<dbReference type="NCBIfam" id="TIGR03160">
    <property type="entry name" value="cobT_DBIPRT"/>
    <property type="match status" value="1"/>
</dbReference>
<dbReference type="NCBIfam" id="NF000996">
    <property type="entry name" value="PRK00105.1"/>
    <property type="match status" value="1"/>
</dbReference>
<dbReference type="PANTHER" id="PTHR43463">
    <property type="entry name" value="NICOTINATE-NUCLEOTIDE--DIMETHYLBENZIMIDAZOLE PHOSPHORIBOSYLTRANSFERASE"/>
    <property type="match status" value="1"/>
</dbReference>
<dbReference type="PANTHER" id="PTHR43463:SF1">
    <property type="entry name" value="NICOTINATE-NUCLEOTIDE--DIMETHYLBENZIMIDAZOLE PHOSPHORIBOSYLTRANSFERASE"/>
    <property type="match status" value="1"/>
</dbReference>
<dbReference type="Pfam" id="PF02277">
    <property type="entry name" value="DBI_PRT"/>
    <property type="match status" value="1"/>
</dbReference>
<dbReference type="SUPFAM" id="SSF52733">
    <property type="entry name" value="Nicotinate mononucleotide:5,6-dimethylbenzimidazole phosphoribosyltransferase (CobT)"/>
    <property type="match status" value="1"/>
</dbReference>
<accession>B5ZSC4</accession>
<gene>
    <name evidence="1" type="primary">cobT</name>
    <name type="ordered locus">Rleg2_2081</name>
</gene>
<comment type="function">
    <text evidence="1">Catalyzes the synthesis of alpha-ribazole-5'-phosphate from nicotinate mononucleotide (NAMN) and 5,6-dimethylbenzimidazole (DMB).</text>
</comment>
<comment type="catalytic activity">
    <reaction evidence="1">
        <text>5,6-dimethylbenzimidazole + nicotinate beta-D-ribonucleotide = alpha-ribazole 5'-phosphate + nicotinate + H(+)</text>
        <dbReference type="Rhea" id="RHEA:11196"/>
        <dbReference type="ChEBI" id="CHEBI:15378"/>
        <dbReference type="ChEBI" id="CHEBI:15890"/>
        <dbReference type="ChEBI" id="CHEBI:32544"/>
        <dbReference type="ChEBI" id="CHEBI:57502"/>
        <dbReference type="ChEBI" id="CHEBI:57918"/>
        <dbReference type="EC" id="2.4.2.21"/>
    </reaction>
</comment>
<comment type="pathway">
    <text evidence="1">Nucleoside biosynthesis; alpha-ribazole biosynthesis; alpha-ribazole from 5,6-dimethylbenzimidazole: step 1/2.</text>
</comment>
<comment type="similarity">
    <text evidence="1">Belongs to the CobT family.</text>
</comment>
<evidence type="ECO:0000255" key="1">
    <source>
        <dbReference type="HAMAP-Rule" id="MF_00230"/>
    </source>
</evidence>
<keyword id="KW-0169">Cobalamin biosynthesis</keyword>
<keyword id="KW-0328">Glycosyltransferase</keyword>
<keyword id="KW-1185">Reference proteome</keyword>
<keyword id="KW-0808">Transferase</keyword>
<organism>
    <name type="scientific">Rhizobium leguminosarum bv. trifolii (strain WSM2304)</name>
    <dbReference type="NCBI Taxonomy" id="395492"/>
    <lineage>
        <taxon>Bacteria</taxon>
        <taxon>Pseudomonadati</taxon>
        <taxon>Pseudomonadota</taxon>
        <taxon>Alphaproteobacteria</taxon>
        <taxon>Hyphomicrobiales</taxon>
        <taxon>Rhizobiaceae</taxon>
        <taxon>Rhizobium/Agrobacterium group</taxon>
        <taxon>Rhizobium</taxon>
    </lineage>
</organism>